<name>TCC3_MOUSE</name>
<evidence type="ECO:0000255" key="1"/>
<evidence type="ECO:0000305" key="2"/>
<evidence type="ECO:0007829" key="3">
    <source>
        <dbReference type="PDB" id="1YPZ"/>
    </source>
</evidence>
<feature type="chain" id="PRO_0000184533" description="T-cell receptor gamma chain C region DFL12">
    <location>
        <begin position="1" status="less than"/>
        <end position="169"/>
    </location>
</feature>
<feature type="transmembrane region" description="Helical" evidence="1">
    <location>
        <begin position="137"/>
        <end position="157"/>
    </location>
</feature>
<feature type="topological domain" description="Cytoplasmic" evidence="1">
    <location>
        <begin position="158"/>
        <end position="169"/>
    </location>
</feature>
<feature type="region of interest" description="C region">
    <location>
        <begin position="1"/>
        <end position="136"/>
    </location>
</feature>
<feature type="non-terminal residue">
    <location>
        <position position="1"/>
    </location>
</feature>
<feature type="helix" evidence="3">
    <location>
        <begin position="21"/>
        <end position="27"/>
    </location>
</feature>
<feature type="strand" evidence="3">
    <location>
        <begin position="30"/>
        <end position="41"/>
    </location>
</feature>
<feature type="strand" evidence="3">
    <location>
        <begin position="45"/>
        <end position="49"/>
    </location>
</feature>
<feature type="strand" evidence="3">
    <location>
        <begin position="65"/>
        <end position="67"/>
    </location>
</feature>
<feature type="strand" evidence="3">
    <location>
        <begin position="70"/>
        <end position="79"/>
    </location>
</feature>
<feature type="helix" evidence="3">
    <location>
        <begin position="81"/>
        <end position="83"/>
    </location>
</feature>
<feature type="strand" evidence="3">
    <location>
        <begin position="88"/>
        <end position="93"/>
    </location>
</feature>
<feature type="turn" evidence="3">
    <location>
        <begin position="98"/>
        <end position="100"/>
    </location>
</feature>
<feature type="strand" evidence="3">
    <location>
        <begin position="103"/>
        <end position="107"/>
    </location>
</feature>
<protein>
    <recommendedName>
        <fullName>T-cell receptor gamma chain C region DFL12</fullName>
    </recommendedName>
</protein>
<sequence length="169" mass="19426">PSDKRLDADISPKPTIFLPSVAETNLHKTGTYLCILEKFFPDVIRVYWKDKNGNTILDSQEGDTLKTKGTYMKFSWLTVPERSMGKEHRCIVKHENNKGGADQEIFFPSIKKVATTCWQDKNDVLQLQFMSTSAYYTYLLLLLKSVIYLAIISFSLLRRTSVCCNEKRS</sequence>
<accession>P06334</accession>
<organism>
    <name type="scientific">Mus musculus</name>
    <name type="common">Mouse</name>
    <dbReference type="NCBI Taxonomy" id="10090"/>
    <lineage>
        <taxon>Eukaryota</taxon>
        <taxon>Metazoa</taxon>
        <taxon>Chordata</taxon>
        <taxon>Craniata</taxon>
        <taxon>Vertebrata</taxon>
        <taxon>Euteleostomi</taxon>
        <taxon>Mammalia</taxon>
        <taxon>Eutheria</taxon>
        <taxon>Euarchontoglires</taxon>
        <taxon>Glires</taxon>
        <taxon>Rodentia</taxon>
        <taxon>Myomorpha</taxon>
        <taxon>Muroidea</taxon>
        <taxon>Muridae</taxon>
        <taxon>Murinae</taxon>
        <taxon>Mus</taxon>
        <taxon>Mus</taxon>
    </lineage>
</organism>
<proteinExistence type="evidence at protein level"/>
<dbReference type="PIR" id="A02138">
    <property type="entry name" value="RWMSC2"/>
</dbReference>
<dbReference type="PDB" id="1YPZ">
    <property type="method" value="X-ray"/>
    <property type="resolution" value="3.40 A"/>
    <property type="chains" value="F/H=1-112"/>
</dbReference>
<dbReference type="PDBsum" id="1YPZ"/>
<dbReference type="SMR" id="P06334"/>
<dbReference type="FunCoup" id="P06334">
    <property type="interactions" value="189"/>
</dbReference>
<dbReference type="IntAct" id="P06334">
    <property type="interactions" value="1"/>
</dbReference>
<dbReference type="InParanoid" id="P06334"/>
<dbReference type="EvolutionaryTrace" id="P06334"/>
<dbReference type="Proteomes" id="UP000000589">
    <property type="component" value="Unplaced"/>
</dbReference>
<dbReference type="RNAct" id="P06334">
    <property type="molecule type" value="protein"/>
</dbReference>
<dbReference type="GO" id="GO:0009897">
    <property type="term" value="C:external side of plasma membrane"/>
    <property type="evidence" value="ECO:0000318"/>
    <property type="project" value="GO_Central"/>
</dbReference>
<dbReference type="CDD" id="cd07697">
    <property type="entry name" value="IgC1_TCR_gamma"/>
    <property type="match status" value="1"/>
</dbReference>
<dbReference type="FunFam" id="2.60.40.10:FF:001083">
    <property type="entry name" value="T cell receptor gamma constant 2"/>
    <property type="match status" value="1"/>
</dbReference>
<dbReference type="Gene3D" id="2.60.40.10">
    <property type="entry name" value="Immunoglobulins"/>
    <property type="match status" value="1"/>
</dbReference>
<dbReference type="InterPro" id="IPR007110">
    <property type="entry name" value="Ig-like_dom"/>
</dbReference>
<dbReference type="InterPro" id="IPR036179">
    <property type="entry name" value="Ig-like_dom_sf"/>
</dbReference>
<dbReference type="InterPro" id="IPR013783">
    <property type="entry name" value="Ig-like_fold"/>
</dbReference>
<dbReference type="InterPro" id="IPR003597">
    <property type="entry name" value="Ig_C1-set"/>
</dbReference>
<dbReference type="InterPro" id="IPR051117">
    <property type="entry name" value="TRG_var/const_region"/>
</dbReference>
<dbReference type="PANTHER" id="PTHR19256:SF65">
    <property type="entry name" value="T CELL RECEPTOR GAMMA CONSTANT 1-RELATED"/>
    <property type="match status" value="1"/>
</dbReference>
<dbReference type="PANTHER" id="PTHR19256">
    <property type="entry name" value="T-CELL RECEPTOR GAMMA CHAIN"/>
    <property type="match status" value="1"/>
</dbReference>
<dbReference type="Pfam" id="PF07654">
    <property type="entry name" value="C1-set"/>
    <property type="match status" value="1"/>
</dbReference>
<dbReference type="SMART" id="SM00407">
    <property type="entry name" value="IGc1"/>
    <property type="match status" value="1"/>
</dbReference>
<dbReference type="SUPFAM" id="SSF48726">
    <property type="entry name" value="Immunoglobulin"/>
    <property type="match status" value="1"/>
</dbReference>
<dbReference type="PROSITE" id="PS50835">
    <property type="entry name" value="IG_LIKE"/>
    <property type="match status" value="1"/>
</dbReference>
<comment type="subcellular location">
    <subcellularLocation>
        <location evidence="2">Membrane</location>
        <topology evidence="2">Single-pass membrane protein</topology>
    </subcellularLocation>
</comment>
<keyword id="KW-0002">3D-structure</keyword>
<keyword id="KW-0393">Immunoglobulin domain</keyword>
<keyword id="KW-0472">Membrane</keyword>
<keyword id="KW-0675">Receptor</keyword>
<keyword id="KW-1185">Reference proteome</keyword>
<keyword id="KW-0812">Transmembrane</keyword>
<keyword id="KW-1133">Transmembrane helix</keyword>
<reference key="1">
    <citation type="journal article" date="1985" name="Nature">
        <title>Limited diversity of the rearranged T-cell gamma gene.</title>
        <authorList>
            <person name="Kranz D.M."/>
            <person name="Saito H."/>
            <person name="Heller M."/>
            <person name="Takagaki Y."/>
            <person name="Haas W."/>
            <person name="Eisen H.N."/>
            <person name="Tonegawa S."/>
        </authorList>
    </citation>
    <scope>NUCLEOTIDE SEQUENCE [MRNA]</scope>
</reference>
<reference key="2">
    <citation type="journal article" date="2005" name="Science">
        <title>Structure of a gammadelta T cell receptor in complex with the nonclassical MHC T22.</title>
        <authorList>
            <person name="Adams E.J."/>
            <person name="Chien Y.-H."/>
            <person name="Garcia K.C."/>
        </authorList>
    </citation>
    <scope>X-RAY CRYSTALLOGRAPHY (3.4 ANGSTROMS) OF 1-112</scope>
</reference>